<keyword id="KW-0002">3D-structure</keyword>
<keyword id="KW-0067">ATP-binding</keyword>
<keyword id="KW-0347">Helicase</keyword>
<keyword id="KW-0378">Hydrolase</keyword>
<keyword id="KW-0507">mRNA processing</keyword>
<keyword id="KW-0508">mRNA splicing</keyword>
<keyword id="KW-0547">Nucleotide-binding</keyword>
<keyword id="KW-0539">Nucleus</keyword>
<keyword id="KW-0597">Phosphoprotein</keyword>
<keyword id="KW-1185">Reference proteome</keyword>
<name>PRP43_YEAST</name>
<feature type="chain" id="PRO_0000055145" description="Pre-mRNA-splicing factor ATP-dependent RNA helicase PRP43">
    <location>
        <begin position="1"/>
        <end position="767"/>
    </location>
</feature>
<feature type="domain" description="Helicase ATP-binding" evidence="1">
    <location>
        <begin position="103"/>
        <end position="268"/>
    </location>
</feature>
<feature type="domain" description="Helicase C-terminal" evidence="2">
    <location>
        <begin position="293"/>
        <end position="473"/>
    </location>
</feature>
<feature type="region of interest" description="Disordered" evidence="3">
    <location>
        <begin position="1"/>
        <end position="74"/>
    </location>
</feature>
<feature type="short sequence motif" description="DEAH box">
    <location>
        <begin position="215"/>
        <end position="218"/>
    </location>
</feature>
<feature type="compositionally biased region" description="Basic and acidic residues" evidence="3">
    <location>
        <begin position="58"/>
        <end position="70"/>
    </location>
</feature>
<feature type="binding site" evidence="1">
    <location>
        <begin position="116"/>
        <end position="123"/>
    </location>
    <ligand>
        <name>ATP</name>
        <dbReference type="ChEBI" id="CHEBI:30616"/>
    </ligand>
</feature>
<feature type="modified residue" description="Phosphoserine" evidence="10">
    <location>
        <position position="8"/>
    </location>
</feature>
<feature type="modified residue" description="Phosphoserine" evidence="10">
    <location>
        <position position="9"/>
    </location>
</feature>
<feature type="mutagenesis site" description="In PRP43-DN1; dominant-negative phenotype." evidence="8">
    <original>G</original>
    <variation>D</variation>
    <location>
        <position position="194"/>
    </location>
</feature>
<feature type="mutagenesis site" description="In PRP43-DN2; dominant-negative phenotype." evidence="8">
    <original>S</original>
    <variation>L</variation>
    <location>
        <position position="247"/>
    </location>
</feature>
<feature type="mutagenesis site" description="In PRP43-1; temperature-sensitive." evidence="8">
    <original>G</original>
    <variation>E</variation>
    <location>
        <position position="395"/>
    </location>
</feature>
<feature type="strand" evidence="11">
    <location>
        <begin position="9"/>
        <end position="11"/>
    </location>
</feature>
<feature type="turn" evidence="11">
    <location>
        <begin position="14"/>
        <end position="17"/>
    </location>
</feature>
<feature type="helix" evidence="11">
    <location>
        <begin position="19"/>
        <end position="33"/>
    </location>
</feature>
<feature type="turn" evidence="11">
    <location>
        <begin position="49"/>
        <end position="52"/>
    </location>
</feature>
<feature type="helix" evidence="11">
    <location>
        <begin position="60"/>
        <end position="68"/>
    </location>
</feature>
<feature type="strand" evidence="11">
    <location>
        <begin position="69"/>
        <end position="71"/>
    </location>
</feature>
<feature type="turn" evidence="11">
    <location>
        <begin position="73"/>
        <end position="75"/>
    </location>
</feature>
<feature type="strand" evidence="13">
    <location>
        <begin position="76"/>
        <end position="78"/>
    </location>
</feature>
<feature type="helix" evidence="11">
    <location>
        <begin position="81"/>
        <end position="90"/>
    </location>
</feature>
<feature type="helix" evidence="11">
    <location>
        <begin position="94"/>
        <end position="98"/>
    </location>
</feature>
<feature type="helix" evidence="11">
    <location>
        <begin position="99"/>
        <end position="108"/>
    </location>
</feature>
<feature type="strand" evidence="11">
    <location>
        <begin position="110"/>
        <end position="115"/>
    </location>
</feature>
<feature type="helix" evidence="11">
    <location>
        <begin position="122"/>
        <end position="134"/>
    </location>
</feature>
<feature type="helix" evidence="11">
    <location>
        <begin position="136"/>
        <end position="139"/>
    </location>
</feature>
<feature type="strand" evidence="11">
    <location>
        <begin position="142"/>
        <end position="148"/>
    </location>
</feature>
<feature type="helix" evidence="11">
    <location>
        <begin position="150"/>
        <end position="163"/>
    </location>
</feature>
<feature type="turn" evidence="11">
    <location>
        <begin position="169"/>
        <end position="171"/>
    </location>
</feature>
<feature type="strand" evidence="11">
    <location>
        <begin position="172"/>
        <end position="176"/>
    </location>
</feature>
<feature type="strand" evidence="11">
    <location>
        <begin position="179"/>
        <end position="181"/>
    </location>
</feature>
<feature type="strand" evidence="11">
    <location>
        <begin position="187"/>
        <end position="192"/>
    </location>
</feature>
<feature type="helix" evidence="11">
    <location>
        <begin position="193"/>
        <end position="202"/>
    </location>
</feature>
<feature type="strand" evidence="11">
    <location>
        <begin position="209"/>
        <end position="214"/>
    </location>
</feature>
<feature type="helix" evidence="11">
    <location>
        <begin position="217"/>
        <end position="219"/>
    </location>
</feature>
<feature type="helix" evidence="11">
    <location>
        <begin position="222"/>
        <end position="237"/>
    </location>
</feature>
<feature type="strand" evidence="11">
    <location>
        <begin position="242"/>
        <end position="248"/>
    </location>
</feature>
<feature type="helix" evidence="11">
    <location>
        <begin position="253"/>
        <end position="258"/>
    </location>
</feature>
<feature type="strand" evidence="11">
    <location>
        <begin position="264"/>
        <end position="266"/>
    </location>
</feature>
<feature type="strand" evidence="11">
    <location>
        <begin position="274"/>
        <end position="277"/>
    </location>
</feature>
<feature type="helix" evidence="11">
    <location>
        <begin position="286"/>
        <end position="300"/>
    </location>
</feature>
<feature type="strand" evidence="11">
    <location>
        <begin position="305"/>
        <end position="309"/>
    </location>
</feature>
<feature type="helix" evidence="11">
    <location>
        <begin position="313"/>
        <end position="334"/>
    </location>
</feature>
<feature type="strand" evidence="11">
    <location>
        <begin position="339"/>
        <end position="344"/>
    </location>
</feature>
<feature type="helix" evidence="11">
    <location>
        <begin position="350"/>
        <end position="353"/>
    </location>
</feature>
<feature type="helix" evidence="11">
    <location>
        <begin position="354"/>
        <end position="357"/>
    </location>
</feature>
<feature type="strand" evidence="11">
    <location>
        <begin position="364"/>
        <end position="367"/>
    </location>
</feature>
<feature type="strand" evidence="11">
    <location>
        <begin position="370"/>
        <end position="375"/>
    </location>
</feature>
<feature type="helix" evidence="11">
    <location>
        <begin position="378"/>
        <end position="381"/>
    </location>
</feature>
<feature type="strand" evidence="11">
    <location>
        <begin position="388"/>
        <end position="393"/>
    </location>
</feature>
<feature type="strand" evidence="11">
    <location>
        <begin position="395"/>
        <end position="403"/>
    </location>
</feature>
<feature type="turn" evidence="11">
    <location>
        <begin position="404"/>
        <end position="407"/>
    </location>
</feature>
<feature type="strand" evidence="11">
    <location>
        <begin position="408"/>
        <end position="415"/>
    </location>
</feature>
<feature type="helix" evidence="11">
    <location>
        <begin position="418"/>
        <end position="426"/>
    </location>
</feature>
<feature type="helix" evidence="11">
    <location>
        <begin position="427"/>
        <end position="429"/>
    </location>
</feature>
<feature type="strand" evidence="11">
    <location>
        <begin position="430"/>
        <end position="440"/>
    </location>
</feature>
<feature type="helix" evidence="11">
    <location>
        <begin position="442"/>
        <end position="447"/>
    </location>
</feature>
<feature type="strand" evidence="14">
    <location>
        <begin position="449"/>
        <end position="452"/>
    </location>
</feature>
<feature type="helix" evidence="11">
    <location>
        <begin position="456"/>
        <end position="459"/>
    </location>
</feature>
<feature type="helix" evidence="11">
    <location>
        <begin position="463"/>
        <end position="471"/>
    </location>
</feature>
<feature type="helix" evidence="11">
    <location>
        <begin position="477"/>
        <end position="479"/>
    </location>
</feature>
<feature type="helix" evidence="11">
    <location>
        <begin position="488"/>
        <end position="500"/>
    </location>
</feature>
<feature type="strand" evidence="14">
    <location>
        <begin position="506"/>
        <end position="508"/>
    </location>
</feature>
<feature type="helix" evidence="11">
    <location>
        <begin position="512"/>
        <end position="517"/>
    </location>
</feature>
<feature type="strand" evidence="11">
    <location>
        <begin position="520"/>
        <end position="522"/>
    </location>
</feature>
<feature type="helix" evidence="11">
    <location>
        <begin position="524"/>
        <end position="532"/>
    </location>
</feature>
<feature type="helix" evidence="11">
    <location>
        <begin position="533"/>
        <end position="536"/>
    </location>
</feature>
<feature type="helix" evidence="11">
    <location>
        <begin position="539"/>
        <end position="549"/>
    </location>
</feature>
<feature type="strand" evidence="13">
    <location>
        <begin position="559"/>
        <end position="561"/>
    </location>
</feature>
<feature type="helix" evidence="11">
    <location>
        <begin position="562"/>
        <end position="570"/>
    </location>
</feature>
<feature type="helix" evidence="11">
    <location>
        <begin position="578"/>
        <end position="589"/>
    </location>
</feature>
<feature type="helix" evidence="11">
    <location>
        <begin position="592"/>
        <end position="597"/>
    </location>
</feature>
<feature type="helix" evidence="11">
    <location>
        <begin position="599"/>
        <end position="605"/>
    </location>
</feature>
<feature type="helix" evidence="11">
    <location>
        <begin position="610"/>
        <end position="629"/>
    </location>
</feature>
<feature type="helix" evidence="11">
    <location>
        <begin position="644"/>
        <end position="656"/>
    </location>
</feature>
<feature type="strand" evidence="11">
    <location>
        <begin position="659"/>
        <end position="663"/>
    </location>
</feature>
<feature type="turn" evidence="12">
    <location>
        <begin position="665"/>
        <end position="667"/>
    </location>
</feature>
<feature type="strand" evidence="11">
    <location>
        <begin position="670"/>
        <end position="672"/>
    </location>
</feature>
<feature type="turn" evidence="11">
    <location>
        <begin position="673"/>
        <end position="675"/>
    </location>
</feature>
<feature type="strand" evidence="11">
    <location>
        <begin position="678"/>
        <end position="681"/>
    </location>
</feature>
<feature type="strand" evidence="11">
    <location>
        <begin position="692"/>
        <end position="712"/>
    </location>
</feature>
<feature type="helix" evidence="11">
    <location>
        <begin position="715"/>
        <end position="721"/>
    </location>
</feature>
<feature type="turn" evidence="11">
    <location>
        <begin position="723"/>
        <end position="725"/>
    </location>
</feature>
<feature type="helix" evidence="11">
    <location>
        <begin position="728"/>
        <end position="730"/>
    </location>
</feature>
<feature type="helix" evidence="11">
    <location>
        <begin position="735"/>
        <end position="748"/>
    </location>
</feature>
<comment type="function">
    <text evidence="7 8">Pre-mRNA processing factor involved in disassembly of spliceosomes after the release of mature mRNA.</text>
</comment>
<comment type="catalytic activity">
    <reaction>
        <text>ATP + H2O = ADP + phosphate + H(+)</text>
        <dbReference type="Rhea" id="RHEA:13065"/>
        <dbReference type="ChEBI" id="CHEBI:15377"/>
        <dbReference type="ChEBI" id="CHEBI:15378"/>
        <dbReference type="ChEBI" id="CHEBI:30616"/>
        <dbReference type="ChEBI" id="CHEBI:43474"/>
        <dbReference type="ChEBI" id="CHEBI:456216"/>
        <dbReference type="EC" id="3.6.4.13"/>
    </reaction>
</comment>
<comment type="subunit">
    <text evidence="5 6 7">Component of the NTR complex (NTC-related complex), composed of NTR1, NTR2 and PRP43. Interacts with NTR1 and NTR2. Interacts with SPP382.</text>
</comment>
<comment type="interaction">
    <interactant intactId="EBI-505">
        <id>P53131</id>
    </interactant>
    <interactant intactId="EBI-5844">
        <id>P36009</id>
        <label>DHR2</label>
    </interactant>
    <organismsDiffer>false</organismsDiffer>
    <experiments>2</experiments>
</comment>
<comment type="interaction">
    <interactant intactId="EBI-505">
        <id>P53131</id>
    </interactant>
    <interactant intactId="EBI-6289">
        <id>P36049</id>
        <label>EBP2</label>
    </interactant>
    <organismsDiffer>false</organismsDiffer>
    <experiments>3</experiments>
</comment>
<comment type="interaction">
    <interactant intactId="EBI-505">
        <id>P53131</id>
    </interactant>
    <interactant intactId="EBI-7321">
        <id>P28007</id>
        <label>GAR1</label>
    </interactant>
    <organismsDiffer>false</organismsDiffer>
    <experiments>3</experiments>
</comment>
<comment type="interaction">
    <interactant intactId="EBI-505">
        <id>P53131</id>
    </interactant>
    <interactant intactId="EBI-22906">
        <id>P43586</id>
        <label>LOC1</label>
    </interactant>
    <organismsDiffer>false</organismsDiffer>
    <experiments>3</experiments>
</comment>
<comment type="interaction">
    <interactant intactId="EBI-505">
        <id>P53131</id>
    </interactant>
    <interactant intactId="EBI-25953">
        <id>P47035</id>
        <label>NET1</label>
    </interactant>
    <organismsDiffer>false</organismsDiffer>
    <experiments>2</experiments>
</comment>
<comment type="interaction">
    <interactant intactId="EBI-505">
        <id>P53131</id>
    </interactant>
    <interactant intactId="EBI-12014">
        <id>P32495</id>
        <label>NHP2</label>
    </interactant>
    <organismsDiffer>false</organismsDiffer>
    <experiments>3</experiments>
</comment>
<comment type="interaction">
    <interactant intactId="EBI-505">
        <id>P53131</id>
    </interactant>
    <interactant intactId="EBI-35895">
        <id>Q08208</id>
        <label>NOP12</label>
    </interactant>
    <organismsDiffer>false</organismsDiffer>
    <experiments>2</experiments>
</comment>
<comment type="interaction">
    <interactant intactId="EBI-505">
        <id>P53131</id>
    </interactant>
    <interactant intactId="EBI-28853">
        <id>P53927</id>
        <label>NOP15</label>
    </interactant>
    <organismsDiffer>false</organismsDiffer>
    <experiments>3</experiments>
</comment>
<comment type="interaction">
    <interactant intactId="EBI-505">
        <id>P53131</id>
    </interactant>
    <interactant intactId="EBI-12122">
        <id>P37838</id>
        <label>NOP4</label>
    </interactant>
    <organismsDiffer>false</organismsDiffer>
    <experiments>3</experiments>
</comment>
<comment type="interaction">
    <interactant intactId="EBI-505">
        <id>P53131</id>
    </interactant>
    <interactant intactId="EBI-22681">
        <id>P40078</id>
        <label>NSA2</label>
    </interactant>
    <organismsDiffer>false</organismsDiffer>
    <experiments>3</experiments>
</comment>
<comment type="interaction">
    <interactant intactId="EBI-505">
        <id>P53131</id>
    </interactant>
    <interactant intactId="EBI-23652">
        <id>P53335</id>
        <label>PXR1</label>
    </interactant>
    <organismsDiffer>false</organismsDiffer>
    <experiments>7</experiments>
</comment>
<comment type="interaction">
    <interactant intactId="EBI-505">
        <id>P53131</id>
    </interactant>
    <interactant intactId="EBI-15730">
        <id>P10964</id>
        <label>RPA190</label>
    </interactant>
    <organismsDiffer>false</organismsDiffer>
    <experiments>2</experiments>
</comment>
<comment type="interaction">
    <interactant intactId="EBI-505">
        <id>P53131</id>
    </interactant>
    <interactant intactId="EBI-576">
        <id>Q06411</id>
        <label>SPP382</label>
    </interactant>
    <organismsDiffer>false</organismsDiffer>
    <experiments>12</experiments>
</comment>
<comment type="interaction">
    <interactant intactId="EBI-505">
        <id>P53131</id>
    </interactant>
    <interactant intactId="EBI-29168">
        <id>P53866</id>
        <label>SQS1</label>
    </interactant>
    <organismsDiffer>false</organismsDiffer>
    <experiments>12</experiments>
</comment>
<comment type="subcellular location">
    <subcellularLocation>
        <location>Nucleus</location>
    </subcellularLocation>
</comment>
<comment type="miscellaneous">
    <text evidence="4">Present with 16900 molecules/cell in log phase SD medium.</text>
</comment>
<comment type="similarity">
    <text evidence="9">Belongs to the DEAD box helicase family. DEAH subfamily. DDX15/PRP43 sub-subfamily.</text>
</comment>
<gene>
    <name type="primary">PRP43</name>
    <name type="ordered locus">YGL120C</name>
</gene>
<proteinExistence type="evidence at protein level"/>
<accession>P53131</accession>
<accession>D6VU28</accession>
<dbReference type="EC" id="3.6.4.13"/>
<dbReference type="EMBL" id="U41851">
    <property type="protein sequence ID" value="AAB86458.1"/>
    <property type="molecule type" value="Genomic_DNA"/>
</dbReference>
<dbReference type="EMBL" id="Z72642">
    <property type="protein sequence ID" value="CAA96828.1"/>
    <property type="molecule type" value="Genomic_DNA"/>
</dbReference>
<dbReference type="EMBL" id="BK006941">
    <property type="protein sequence ID" value="DAA07989.1"/>
    <property type="molecule type" value="Genomic_DNA"/>
</dbReference>
<dbReference type="PIR" id="S64130">
    <property type="entry name" value="S64130"/>
</dbReference>
<dbReference type="RefSeq" id="NP_011395.1">
    <property type="nucleotide sequence ID" value="NM_001180985.1"/>
</dbReference>
<dbReference type="PDB" id="2XAU">
    <property type="method" value="X-ray"/>
    <property type="resolution" value="1.90 A"/>
    <property type="chains" value="A/B=1-767"/>
</dbReference>
<dbReference type="PDB" id="3KX2">
    <property type="method" value="X-ray"/>
    <property type="resolution" value="2.20 A"/>
    <property type="chains" value="A/B=1-767"/>
</dbReference>
<dbReference type="PDB" id="5I8Q">
    <property type="method" value="X-ray"/>
    <property type="resolution" value="4.20 A"/>
    <property type="chains" value="A/B=1-767"/>
</dbReference>
<dbReference type="PDB" id="5JPT">
    <property type="method" value="X-ray"/>
    <property type="resolution" value="2.94 A"/>
    <property type="chains" value="A/B=1-767"/>
</dbReference>
<dbReference type="PDB" id="5Y88">
    <property type="method" value="EM"/>
    <property type="resolution" value="3.70 A"/>
    <property type="chains" value="W=1-767"/>
</dbReference>
<dbReference type="PDB" id="8RDY">
    <property type="method" value="EM"/>
    <property type="resolution" value="3.33 A"/>
    <property type="chains" value="A=1-767"/>
</dbReference>
<dbReference type="PDBsum" id="2XAU"/>
<dbReference type="PDBsum" id="3KX2"/>
<dbReference type="PDBsum" id="5I8Q"/>
<dbReference type="PDBsum" id="5JPT"/>
<dbReference type="PDBsum" id="5Y88"/>
<dbReference type="PDBsum" id="8RDY"/>
<dbReference type="EMDB" id="EMD-19078"/>
<dbReference type="EMDB" id="EMD-6817"/>
<dbReference type="SMR" id="P53131"/>
<dbReference type="BioGRID" id="33131">
    <property type="interactions" value="508"/>
</dbReference>
<dbReference type="ComplexPortal" id="CPX-1886">
    <property type="entry name" value="Post-mRNA release spliceosomal complex"/>
</dbReference>
<dbReference type="DIP" id="DIP-5152N"/>
<dbReference type="FunCoup" id="P53131">
    <property type="interactions" value="1845"/>
</dbReference>
<dbReference type="IntAct" id="P53131">
    <property type="interactions" value="174"/>
</dbReference>
<dbReference type="MINT" id="P53131"/>
<dbReference type="STRING" id="4932.YGL120C"/>
<dbReference type="GlyGen" id="P53131">
    <property type="glycosylation" value="2 sites, 1 O-linked glycan (2 sites)"/>
</dbReference>
<dbReference type="iPTMnet" id="P53131"/>
<dbReference type="PaxDb" id="4932-YGL120C"/>
<dbReference type="PeptideAtlas" id="P53131"/>
<dbReference type="EnsemblFungi" id="YGL120C_mRNA">
    <property type="protein sequence ID" value="YGL120C"/>
    <property type="gene ID" value="YGL120C"/>
</dbReference>
<dbReference type="GeneID" id="852757"/>
<dbReference type="KEGG" id="sce:YGL120C"/>
<dbReference type="AGR" id="SGD:S000003088"/>
<dbReference type="SGD" id="S000003088">
    <property type="gene designation" value="PRP43"/>
</dbReference>
<dbReference type="VEuPathDB" id="FungiDB:YGL120C"/>
<dbReference type="eggNOG" id="KOG0925">
    <property type="taxonomic scope" value="Eukaryota"/>
</dbReference>
<dbReference type="GeneTree" id="ENSGT00940000175573"/>
<dbReference type="HOGENOM" id="CLU_001832_5_11_1"/>
<dbReference type="InParanoid" id="P53131"/>
<dbReference type="OMA" id="MKVYPLY"/>
<dbReference type="OrthoDB" id="10253254at2759"/>
<dbReference type="BioCyc" id="YEAST:G3O-30617-MONOMER"/>
<dbReference type="BioGRID-ORCS" id="852757">
    <property type="hits" value="9 hits in 10 CRISPR screens"/>
</dbReference>
<dbReference type="CD-CODE" id="BDAE0F88">
    <property type="entry name" value="Nucleolus"/>
</dbReference>
<dbReference type="CD-CODE" id="E03F929F">
    <property type="entry name" value="Stress granule"/>
</dbReference>
<dbReference type="EvolutionaryTrace" id="P53131"/>
<dbReference type="PRO" id="PR:P53131"/>
<dbReference type="Proteomes" id="UP000002311">
    <property type="component" value="Chromosome VII"/>
</dbReference>
<dbReference type="RNAct" id="P53131">
    <property type="molecule type" value="protein"/>
</dbReference>
<dbReference type="GO" id="GO:0030686">
    <property type="term" value="C:90S preribosome"/>
    <property type="evidence" value="ECO:0007005"/>
    <property type="project" value="SGD"/>
</dbReference>
<dbReference type="GO" id="GO:0005739">
    <property type="term" value="C:mitochondrion"/>
    <property type="evidence" value="ECO:0007005"/>
    <property type="project" value="SGD"/>
</dbReference>
<dbReference type="GO" id="GO:0005730">
    <property type="term" value="C:nucleolus"/>
    <property type="evidence" value="ECO:0000314"/>
    <property type="project" value="ComplexPortal"/>
</dbReference>
<dbReference type="GO" id="GO:0071014">
    <property type="term" value="C:post-mRNA release spliceosomal complex"/>
    <property type="evidence" value="ECO:0000315"/>
    <property type="project" value="SGD"/>
</dbReference>
<dbReference type="GO" id="GO:0032040">
    <property type="term" value="C:small-subunit processome"/>
    <property type="evidence" value="ECO:0000353"/>
    <property type="project" value="ComplexPortal"/>
</dbReference>
<dbReference type="GO" id="GO:0005681">
    <property type="term" value="C:spliceosomal complex"/>
    <property type="evidence" value="ECO:0000318"/>
    <property type="project" value="GO_Central"/>
</dbReference>
<dbReference type="GO" id="GO:0005524">
    <property type="term" value="F:ATP binding"/>
    <property type="evidence" value="ECO:0007669"/>
    <property type="project" value="UniProtKB-KW"/>
</dbReference>
<dbReference type="GO" id="GO:0016887">
    <property type="term" value="F:ATP hydrolysis activity"/>
    <property type="evidence" value="ECO:0007669"/>
    <property type="project" value="RHEA"/>
</dbReference>
<dbReference type="GO" id="GO:0004386">
    <property type="term" value="F:helicase activity"/>
    <property type="evidence" value="ECO:0000318"/>
    <property type="project" value="GO_Central"/>
</dbReference>
<dbReference type="GO" id="GO:0003729">
    <property type="term" value="F:mRNA binding"/>
    <property type="evidence" value="ECO:0007005"/>
    <property type="project" value="SGD"/>
</dbReference>
<dbReference type="GO" id="GO:0003723">
    <property type="term" value="F:RNA binding"/>
    <property type="evidence" value="ECO:0000318"/>
    <property type="project" value="GO_Central"/>
</dbReference>
<dbReference type="GO" id="GO:0003724">
    <property type="term" value="F:RNA helicase activity"/>
    <property type="evidence" value="ECO:0000314"/>
    <property type="project" value="SGD"/>
</dbReference>
<dbReference type="GO" id="GO:0000466">
    <property type="term" value="P:maturation of 5.8S rRNA from tricistronic rRNA transcript (SSU-rRNA, 5.8S rRNA, LSU-rRNA)"/>
    <property type="evidence" value="ECO:0000315"/>
    <property type="project" value="SGD"/>
</dbReference>
<dbReference type="GO" id="GO:0000463">
    <property type="term" value="P:maturation of LSU-rRNA from tricistronic rRNA transcript (SSU-rRNA, 5.8S rRNA, LSU-rRNA)"/>
    <property type="evidence" value="ECO:0000315"/>
    <property type="project" value="SGD"/>
</dbReference>
<dbReference type="GO" id="GO:0030490">
    <property type="term" value="P:maturation of SSU-rRNA"/>
    <property type="evidence" value="ECO:0000316"/>
    <property type="project" value="SGD"/>
</dbReference>
<dbReference type="GO" id="GO:0000462">
    <property type="term" value="P:maturation of SSU-rRNA from tricistronic rRNA transcript (SSU-rRNA, 5.8S rRNA, LSU-rRNA)"/>
    <property type="evidence" value="ECO:0000315"/>
    <property type="project" value="SGD"/>
</dbReference>
<dbReference type="GO" id="GO:0042273">
    <property type="term" value="P:ribosomal large subunit biogenesis"/>
    <property type="evidence" value="ECO:0000315"/>
    <property type="project" value="SGD"/>
</dbReference>
<dbReference type="GO" id="GO:0006364">
    <property type="term" value="P:rRNA processing"/>
    <property type="evidence" value="ECO:0000315"/>
    <property type="project" value="SGD"/>
</dbReference>
<dbReference type="GO" id="GO:0000390">
    <property type="term" value="P:spliceosomal complex disassembly"/>
    <property type="evidence" value="ECO:0000314"/>
    <property type="project" value="SGD"/>
</dbReference>
<dbReference type="CDD" id="cd17973">
    <property type="entry name" value="DEXHc_DHX15"/>
    <property type="match status" value="1"/>
</dbReference>
<dbReference type="CDD" id="cd18791">
    <property type="entry name" value="SF2_C_RHA"/>
    <property type="match status" value="1"/>
</dbReference>
<dbReference type="FunFam" id="3.40.50.300:FF:000007">
    <property type="entry name" value="Pre-mRNA-splicing factor ATP-dependent RNA helicase"/>
    <property type="match status" value="1"/>
</dbReference>
<dbReference type="FunFam" id="3.40.50.300:FF:000324">
    <property type="entry name" value="pre-mRNA-splicing factor ATP-dependent RNA helicase DHX15"/>
    <property type="match status" value="1"/>
</dbReference>
<dbReference type="FunFam" id="1.20.120.1080:FF:000003">
    <property type="entry name" value="Pre-mRNA-splicing factor ATP-dependent RNA helicase PRP43"/>
    <property type="match status" value="1"/>
</dbReference>
<dbReference type="Gene3D" id="1.20.120.1080">
    <property type="match status" value="1"/>
</dbReference>
<dbReference type="Gene3D" id="3.40.50.300">
    <property type="entry name" value="P-loop containing nucleotide triphosphate hydrolases"/>
    <property type="match status" value="2"/>
</dbReference>
<dbReference type="InterPro" id="IPR011709">
    <property type="entry name" value="DEAD-box_helicase_OB_fold"/>
</dbReference>
<dbReference type="InterPro" id="IPR011545">
    <property type="entry name" value="DEAD/DEAH_box_helicase_dom"/>
</dbReference>
<dbReference type="InterPro" id="IPR044756">
    <property type="entry name" value="DHX15_DEXHc"/>
</dbReference>
<dbReference type="InterPro" id="IPR002464">
    <property type="entry name" value="DNA/RNA_helicase_DEAH_CS"/>
</dbReference>
<dbReference type="InterPro" id="IPR048333">
    <property type="entry name" value="HA2_WH"/>
</dbReference>
<dbReference type="InterPro" id="IPR007502">
    <property type="entry name" value="Helicase-assoc_dom"/>
</dbReference>
<dbReference type="InterPro" id="IPR014001">
    <property type="entry name" value="Helicase_ATP-bd"/>
</dbReference>
<dbReference type="InterPro" id="IPR001650">
    <property type="entry name" value="Helicase_C-like"/>
</dbReference>
<dbReference type="InterPro" id="IPR027417">
    <property type="entry name" value="P-loop_NTPase"/>
</dbReference>
<dbReference type="PANTHER" id="PTHR18934">
    <property type="entry name" value="ATP-DEPENDENT RNA HELICASE"/>
    <property type="match status" value="1"/>
</dbReference>
<dbReference type="PANTHER" id="PTHR18934:SF109">
    <property type="entry name" value="ATP-DEPENDENT RNA HELICASE DHX15 HOMOLOG"/>
    <property type="match status" value="1"/>
</dbReference>
<dbReference type="Pfam" id="PF00270">
    <property type="entry name" value="DEAD"/>
    <property type="match status" value="1"/>
</dbReference>
<dbReference type="Pfam" id="PF21010">
    <property type="entry name" value="HA2_C"/>
    <property type="match status" value="1"/>
</dbReference>
<dbReference type="Pfam" id="PF04408">
    <property type="entry name" value="HA2_N"/>
    <property type="match status" value="1"/>
</dbReference>
<dbReference type="Pfam" id="PF00271">
    <property type="entry name" value="Helicase_C"/>
    <property type="match status" value="1"/>
</dbReference>
<dbReference type="Pfam" id="PF07717">
    <property type="entry name" value="OB_NTP_bind"/>
    <property type="match status" value="1"/>
</dbReference>
<dbReference type="SMART" id="SM00487">
    <property type="entry name" value="DEXDc"/>
    <property type="match status" value="1"/>
</dbReference>
<dbReference type="SMART" id="SM00847">
    <property type="entry name" value="HA2"/>
    <property type="match status" value="1"/>
</dbReference>
<dbReference type="SMART" id="SM00490">
    <property type="entry name" value="HELICc"/>
    <property type="match status" value="1"/>
</dbReference>
<dbReference type="SUPFAM" id="SSF52540">
    <property type="entry name" value="P-loop containing nucleoside triphosphate hydrolases"/>
    <property type="match status" value="1"/>
</dbReference>
<dbReference type="PROSITE" id="PS00690">
    <property type="entry name" value="DEAH_ATP_HELICASE"/>
    <property type="match status" value="1"/>
</dbReference>
<dbReference type="PROSITE" id="PS51192">
    <property type="entry name" value="HELICASE_ATP_BIND_1"/>
    <property type="match status" value="1"/>
</dbReference>
<dbReference type="PROSITE" id="PS51194">
    <property type="entry name" value="HELICASE_CTER"/>
    <property type="match status" value="1"/>
</dbReference>
<sequence>MGSKRRFSSEHPDPVETSIPEQAAEIAEELSKQHPLPSEEPLVHHDAGEFKGLQRHHTSAEEAQKLEDGKINPFTGREFTPKYVDILKIRRELPVHAQRDEFLKLYQNNQIMVFVGETGSGKTTQIPQFVLFDEMPHLENTQVACTQPRRVAAMSVAQRVAEEMDVKLGEEVGYSIRFENKTSNKTILKYMTDGMLLREAMEDHDLSRYSCIILDEAHERTLATDILMGLLKQVVKRRPDLKIIIMSATLDAEKFQRYFNDAPLLAVPGRTYPVELYYTPEFQRDYLDSAIRTVLQIHATEEAGDILLFLTGEDEIEDAVRKISLEGDQLVREEGCGPLSVYPLYGSLPPHQQQRIFEPAPESHNGRPGRKVVISTNIAETSLTIDGIVYVVDPGFSKQKVYNPRIRVESLLVSPISKASAQQRAGRAGRTRPGKCFRLYTEEAFQKELIEQSYPEILRSNLSSTVLELKKLGIDDLVHFDFMDPPAPETMMRALEELNYLACLDDEGNLTPLGRLASQFPLDPMLAVMLIGSFEFQCSQEILTIVAMLSVPNVFIRPTKDKKRADDAKNIFAHPDGDHITLLNVYHAFKSDEAYEYGIHKWCRDHYLNYRSLSAADNIRSQLERLMNRYNLELNTTDYESPKYFDNIRKALASGFFMQVAKKRSGAKGYITVKDNQDVLIHPSTVLGHDAEWVIYNEFVLTSKNYIRTVTSVRPEWLIEIAPAYYDLSNFQKGDVKLSLERIKEKVDRLNELKQGKNKKKSKHSKK</sequence>
<protein>
    <recommendedName>
        <fullName>Pre-mRNA-splicing factor ATP-dependent RNA helicase PRP43</fullName>
        <ecNumber>3.6.4.13</ecNumber>
    </recommendedName>
    <alternativeName>
        <fullName>Helicase JA1</fullName>
    </alternativeName>
</protein>
<evidence type="ECO:0000255" key="1">
    <source>
        <dbReference type="PROSITE-ProRule" id="PRU00541"/>
    </source>
</evidence>
<evidence type="ECO:0000255" key="2">
    <source>
        <dbReference type="PROSITE-ProRule" id="PRU00542"/>
    </source>
</evidence>
<evidence type="ECO:0000256" key="3">
    <source>
        <dbReference type="SAM" id="MobiDB-lite"/>
    </source>
</evidence>
<evidence type="ECO:0000269" key="4">
    <source>
    </source>
</evidence>
<evidence type="ECO:0000269" key="5">
    <source>
    </source>
</evidence>
<evidence type="ECO:0000269" key="6">
    <source>
    </source>
</evidence>
<evidence type="ECO:0000269" key="7">
    <source>
    </source>
</evidence>
<evidence type="ECO:0000269" key="8">
    <source>
    </source>
</evidence>
<evidence type="ECO:0000305" key="9"/>
<evidence type="ECO:0007744" key="10">
    <source>
    </source>
</evidence>
<evidence type="ECO:0007829" key="11">
    <source>
        <dbReference type="PDB" id="2XAU"/>
    </source>
</evidence>
<evidence type="ECO:0007829" key="12">
    <source>
        <dbReference type="PDB" id="3KX2"/>
    </source>
</evidence>
<evidence type="ECO:0007829" key="13">
    <source>
        <dbReference type="PDB" id="5JPT"/>
    </source>
</evidence>
<evidence type="ECO:0007829" key="14">
    <source>
        <dbReference type="PDB" id="5Y88"/>
    </source>
</evidence>
<reference key="1">
    <citation type="journal article" date="1997" name="Proc. Natl. Acad. Sci. U.S.A.">
        <title>Prp43: an RNA helicase-like factor involved in spliceosome disassembly.</title>
        <authorList>
            <person name="Arenas J.E."/>
            <person name="Abelson J.N."/>
        </authorList>
    </citation>
    <scope>NUCLEOTIDE SEQUENCE [GENOMIC DNA]</scope>
    <scope>FUNCTION</scope>
    <scope>MUTAGENESIS OF GLY-194; SER-247 AND GLY-395</scope>
    <source>
        <strain>SS330</strain>
    </source>
</reference>
<reference key="2">
    <citation type="journal article" date="1997" name="Nature">
        <title>The nucleotide sequence of Saccharomyces cerevisiae chromosome VII.</title>
        <authorList>
            <person name="Tettelin H."/>
            <person name="Agostoni-Carbone M.L."/>
            <person name="Albermann K."/>
            <person name="Albers M."/>
            <person name="Arroyo J."/>
            <person name="Backes U."/>
            <person name="Barreiros T."/>
            <person name="Bertani I."/>
            <person name="Bjourson A.J."/>
            <person name="Brueckner M."/>
            <person name="Bruschi C.V."/>
            <person name="Carignani G."/>
            <person name="Castagnoli L."/>
            <person name="Cerdan E."/>
            <person name="Clemente M.L."/>
            <person name="Coblenz A."/>
            <person name="Coglievina M."/>
            <person name="Coissac E."/>
            <person name="Defoor E."/>
            <person name="Del Bino S."/>
            <person name="Delius H."/>
            <person name="Delneri D."/>
            <person name="de Wergifosse P."/>
            <person name="Dujon B."/>
            <person name="Durand P."/>
            <person name="Entian K.-D."/>
            <person name="Eraso P."/>
            <person name="Escribano V."/>
            <person name="Fabiani L."/>
            <person name="Fartmann B."/>
            <person name="Feroli F."/>
            <person name="Feuermann M."/>
            <person name="Frontali L."/>
            <person name="Garcia-Gonzalez M."/>
            <person name="Garcia-Saez M.I."/>
            <person name="Goffeau A."/>
            <person name="Guerreiro P."/>
            <person name="Hani J."/>
            <person name="Hansen M."/>
            <person name="Hebling U."/>
            <person name="Hernandez K."/>
            <person name="Heumann K."/>
            <person name="Hilger F."/>
            <person name="Hofmann B."/>
            <person name="Indge K.J."/>
            <person name="James C.M."/>
            <person name="Klima R."/>
            <person name="Koetter P."/>
            <person name="Kramer B."/>
            <person name="Kramer W."/>
            <person name="Lauquin G."/>
            <person name="Leuther H."/>
            <person name="Louis E.J."/>
            <person name="Maillier E."/>
            <person name="Marconi A."/>
            <person name="Martegani E."/>
            <person name="Mazon M.J."/>
            <person name="Mazzoni C."/>
            <person name="McReynolds A.D.K."/>
            <person name="Melchioretto P."/>
            <person name="Mewes H.-W."/>
            <person name="Minenkova O."/>
            <person name="Mueller-Auer S."/>
            <person name="Nawrocki A."/>
            <person name="Netter P."/>
            <person name="Neu R."/>
            <person name="Nombela C."/>
            <person name="Oliver S.G."/>
            <person name="Panzeri L."/>
            <person name="Paoluzi S."/>
            <person name="Plevani P."/>
            <person name="Portetelle D."/>
            <person name="Portillo F."/>
            <person name="Potier S."/>
            <person name="Purnelle B."/>
            <person name="Rieger M."/>
            <person name="Riles L."/>
            <person name="Rinaldi T."/>
            <person name="Robben J."/>
            <person name="Rodrigues-Pousada C."/>
            <person name="Rodriguez-Belmonte E."/>
            <person name="Rodriguez-Torres A.M."/>
            <person name="Rose M."/>
            <person name="Ruzzi M."/>
            <person name="Saliola M."/>
            <person name="Sanchez-Perez M."/>
            <person name="Schaefer B."/>
            <person name="Schaefer M."/>
            <person name="Scharfe M."/>
            <person name="Schmidheini T."/>
            <person name="Schreer A."/>
            <person name="Skala J."/>
            <person name="Souciet J.-L."/>
            <person name="Steensma H.Y."/>
            <person name="Talla E."/>
            <person name="Thierry A."/>
            <person name="Vandenbol M."/>
            <person name="van der Aart Q.J.M."/>
            <person name="Van Dyck L."/>
            <person name="Vanoni M."/>
            <person name="Verhasselt P."/>
            <person name="Voet M."/>
            <person name="Volckaert G."/>
            <person name="Wambutt R."/>
            <person name="Watson M.D."/>
            <person name="Weber N."/>
            <person name="Wedler E."/>
            <person name="Wedler H."/>
            <person name="Wipfli P."/>
            <person name="Wolf K."/>
            <person name="Wright L.F."/>
            <person name="Zaccaria P."/>
            <person name="Zimmermann M."/>
            <person name="Zollner A."/>
            <person name="Kleine K."/>
        </authorList>
    </citation>
    <scope>NUCLEOTIDE SEQUENCE [LARGE SCALE GENOMIC DNA]</scope>
    <source>
        <strain>ATCC 204508 / S288c</strain>
    </source>
</reference>
<reference key="3">
    <citation type="journal article" date="2014" name="G3 (Bethesda)">
        <title>The reference genome sequence of Saccharomyces cerevisiae: Then and now.</title>
        <authorList>
            <person name="Engel S.R."/>
            <person name="Dietrich F.S."/>
            <person name="Fisk D.G."/>
            <person name="Binkley G."/>
            <person name="Balakrishnan R."/>
            <person name="Costanzo M.C."/>
            <person name="Dwight S.S."/>
            <person name="Hitz B.C."/>
            <person name="Karra K."/>
            <person name="Nash R.S."/>
            <person name="Weng S."/>
            <person name="Wong E.D."/>
            <person name="Lloyd P."/>
            <person name="Skrzypek M.S."/>
            <person name="Miyasato S.R."/>
            <person name="Simison M."/>
            <person name="Cherry J.M."/>
        </authorList>
    </citation>
    <scope>GENOME REANNOTATION</scope>
    <source>
        <strain>ATCC 204508 / S288c</strain>
    </source>
</reference>
<reference key="4">
    <citation type="journal article" date="2003" name="Mol. Cell">
        <title>Assigning function to yeast proteins by integration of technologies.</title>
        <authorList>
            <person name="Hazbun T.R."/>
            <person name="Malmstroem L."/>
            <person name="Anderson S."/>
            <person name="Graczyk B.J."/>
            <person name="Fox B."/>
            <person name="Riffle M."/>
            <person name="Sundin B.A."/>
            <person name="Aranda J.D."/>
            <person name="McDonald W.H."/>
            <person name="Chiu C.-H."/>
            <person name="Snydsman B.E."/>
            <person name="Bradley P."/>
            <person name="Muller E.G.D."/>
            <person name="Fields S."/>
            <person name="Baker D."/>
            <person name="Yates J.R. III"/>
            <person name="Davis T.N."/>
        </authorList>
    </citation>
    <scope>IDENTIFICATION BY MASS SPECTROMETRY</scope>
    <scope>INTERACTION WITH SPP382</scope>
</reference>
<reference key="5">
    <citation type="journal article" date="2003" name="Nature">
        <title>Global analysis of protein expression in yeast.</title>
        <authorList>
            <person name="Ghaemmaghami S."/>
            <person name="Huh W.-K."/>
            <person name="Bower K."/>
            <person name="Howson R.W."/>
            <person name="Belle A."/>
            <person name="Dephoure N."/>
            <person name="O'Shea E.K."/>
            <person name="Weissman J.S."/>
        </authorList>
    </citation>
    <scope>LEVEL OF PROTEIN EXPRESSION [LARGE SCALE ANALYSIS]</scope>
</reference>
<reference key="6">
    <citation type="journal article" date="2005" name="Genes Dev.">
        <title>Spliceosome disassembly catalyzed by Prp43 and its associated components Ntr1 and Ntr2.</title>
        <authorList>
            <person name="Tsai R.-T."/>
            <person name="Fu R.-H."/>
            <person name="Yeh F.-L."/>
            <person name="Tseng C.-K."/>
            <person name="Lin Y.-C."/>
            <person name="Huang Y.-H."/>
            <person name="Cheng S.-C."/>
        </authorList>
    </citation>
    <scope>IDENTIFICATION IN THE NTC-RELATED COMPLEX</scope>
    <scope>INTERACTION WITH NTR1 AND NTR2</scope>
</reference>
<reference key="7">
    <citation type="journal article" date="2005" name="Mol. Cell. Proteomics">
        <title>Quantitative phosphoproteomics applied to the yeast pheromone signaling pathway.</title>
        <authorList>
            <person name="Gruhler A."/>
            <person name="Olsen J.V."/>
            <person name="Mohammed S."/>
            <person name="Mortensen P."/>
            <person name="Faergeman N.J."/>
            <person name="Mann M."/>
            <person name="Jensen O.N."/>
        </authorList>
    </citation>
    <scope>IDENTIFICATION BY MASS SPECTROMETRY [LARGE SCALE ANALYSIS]</scope>
    <source>
        <strain>YAL6B</strain>
    </source>
</reference>
<reference key="8">
    <citation type="journal article" date="2006" name="Mol. Cell. Biol.">
        <title>Yeast ntr1/spp382 mediates prp43 function in postspliceosomes.</title>
        <authorList>
            <person name="Boon K.-L."/>
            <person name="Auchynnikava T."/>
            <person name="Edwalds-Gilbert G."/>
            <person name="Barrass J.D."/>
            <person name="Droop A.P."/>
            <person name="Dez C."/>
            <person name="Beggs J.D."/>
        </authorList>
    </citation>
    <scope>FUNCTION</scope>
    <scope>INTERACTION WITH NTR1 AND NTR2</scope>
</reference>
<reference key="9">
    <citation type="journal article" date="2007" name="J. Proteome Res.">
        <title>Large-scale phosphorylation analysis of alpha-factor-arrested Saccharomyces cerevisiae.</title>
        <authorList>
            <person name="Li X."/>
            <person name="Gerber S.A."/>
            <person name="Rudner A.D."/>
            <person name="Beausoleil S.A."/>
            <person name="Haas W."/>
            <person name="Villen J."/>
            <person name="Elias J.E."/>
            <person name="Gygi S.P."/>
        </authorList>
    </citation>
    <scope>IDENTIFICATION BY MASS SPECTROMETRY [LARGE SCALE ANALYSIS]</scope>
    <source>
        <strain>ADR376</strain>
    </source>
</reference>
<reference key="10">
    <citation type="journal article" date="2007" name="Proc. Natl. Acad. Sci. U.S.A.">
        <title>Analysis of phosphorylation sites on proteins from Saccharomyces cerevisiae by electron transfer dissociation (ETD) mass spectrometry.</title>
        <authorList>
            <person name="Chi A."/>
            <person name="Huttenhower C."/>
            <person name="Geer L.Y."/>
            <person name="Coon J.J."/>
            <person name="Syka J.E.P."/>
            <person name="Bai D.L."/>
            <person name="Shabanowitz J."/>
            <person name="Burke D.J."/>
            <person name="Troyanskaya O.G."/>
            <person name="Hunt D.F."/>
        </authorList>
    </citation>
    <scope>IDENTIFICATION BY MASS SPECTROMETRY [LARGE SCALE ANALYSIS]</scope>
</reference>
<reference key="11">
    <citation type="journal article" date="2008" name="Mol. Cell. Proteomics">
        <title>A multidimensional chromatography technology for in-depth phosphoproteome analysis.</title>
        <authorList>
            <person name="Albuquerque C.P."/>
            <person name="Smolka M.B."/>
            <person name="Payne S.H."/>
            <person name="Bafna V."/>
            <person name="Eng J."/>
            <person name="Zhou H."/>
        </authorList>
    </citation>
    <scope>IDENTIFICATION BY MASS SPECTROMETRY [LARGE SCALE ANALYSIS]</scope>
</reference>
<reference key="12">
    <citation type="journal article" date="2009" name="Science">
        <title>Global analysis of Cdk1 substrate phosphorylation sites provides insights into evolution.</title>
        <authorList>
            <person name="Holt L.J."/>
            <person name="Tuch B.B."/>
            <person name="Villen J."/>
            <person name="Johnson A.D."/>
            <person name="Gygi S.P."/>
            <person name="Morgan D.O."/>
        </authorList>
    </citation>
    <scope>PHOSPHORYLATION [LARGE SCALE ANALYSIS] AT SER-8 AND SER-9</scope>
    <scope>IDENTIFICATION BY MASS SPECTROMETRY [LARGE SCALE ANALYSIS]</scope>
</reference>
<organism>
    <name type="scientific">Saccharomyces cerevisiae (strain ATCC 204508 / S288c)</name>
    <name type="common">Baker's yeast</name>
    <dbReference type="NCBI Taxonomy" id="559292"/>
    <lineage>
        <taxon>Eukaryota</taxon>
        <taxon>Fungi</taxon>
        <taxon>Dikarya</taxon>
        <taxon>Ascomycota</taxon>
        <taxon>Saccharomycotina</taxon>
        <taxon>Saccharomycetes</taxon>
        <taxon>Saccharomycetales</taxon>
        <taxon>Saccharomycetaceae</taxon>
        <taxon>Saccharomyces</taxon>
    </lineage>
</organism>